<feature type="chain" id="PRO_1000120595" description="Small ribosomal subunit protein bS21">
    <location>
        <begin position="1"/>
        <end position="71"/>
    </location>
</feature>
<protein>
    <recommendedName>
        <fullName evidence="1">Small ribosomal subunit protein bS21</fullName>
    </recommendedName>
    <alternativeName>
        <fullName evidence="2">30S ribosomal protein S21</fullName>
    </alternativeName>
</protein>
<organism>
    <name type="scientific">Cellvibrio japonicus (strain Ueda107)</name>
    <name type="common">Pseudomonas fluorescens subsp. cellulosa</name>
    <dbReference type="NCBI Taxonomy" id="498211"/>
    <lineage>
        <taxon>Bacteria</taxon>
        <taxon>Pseudomonadati</taxon>
        <taxon>Pseudomonadota</taxon>
        <taxon>Gammaproteobacteria</taxon>
        <taxon>Cellvibrionales</taxon>
        <taxon>Cellvibrionaceae</taxon>
        <taxon>Cellvibrio</taxon>
    </lineage>
</organism>
<dbReference type="EMBL" id="CP000934">
    <property type="protein sequence ID" value="ACE82973.1"/>
    <property type="molecule type" value="Genomic_DNA"/>
</dbReference>
<dbReference type="RefSeq" id="WP_012486429.1">
    <property type="nucleotide sequence ID" value="NC_010995.1"/>
</dbReference>
<dbReference type="SMR" id="B3PKA4"/>
<dbReference type="STRING" id="498211.CJA_0767"/>
<dbReference type="KEGG" id="cja:CJA_0767"/>
<dbReference type="eggNOG" id="COG0828">
    <property type="taxonomic scope" value="Bacteria"/>
</dbReference>
<dbReference type="HOGENOM" id="CLU_159258_1_0_6"/>
<dbReference type="OrthoDB" id="9799244at2"/>
<dbReference type="Proteomes" id="UP000001036">
    <property type="component" value="Chromosome"/>
</dbReference>
<dbReference type="GO" id="GO:1990904">
    <property type="term" value="C:ribonucleoprotein complex"/>
    <property type="evidence" value="ECO:0007669"/>
    <property type="project" value="UniProtKB-KW"/>
</dbReference>
<dbReference type="GO" id="GO:0005840">
    <property type="term" value="C:ribosome"/>
    <property type="evidence" value="ECO:0007669"/>
    <property type="project" value="UniProtKB-KW"/>
</dbReference>
<dbReference type="GO" id="GO:0003735">
    <property type="term" value="F:structural constituent of ribosome"/>
    <property type="evidence" value="ECO:0007669"/>
    <property type="project" value="InterPro"/>
</dbReference>
<dbReference type="GO" id="GO:0006412">
    <property type="term" value="P:translation"/>
    <property type="evidence" value="ECO:0007669"/>
    <property type="project" value="UniProtKB-UniRule"/>
</dbReference>
<dbReference type="Gene3D" id="1.20.5.1150">
    <property type="entry name" value="Ribosomal protein S8"/>
    <property type="match status" value="1"/>
</dbReference>
<dbReference type="HAMAP" id="MF_00358">
    <property type="entry name" value="Ribosomal_bS21"/>
    <property type="match status" value="1"/>
</dbReference>
<dbReference type="InterPro" id="IPR001911">
    <property type="entry name" value="Ribosomal_bS21"/>
</dbReference>
<dbReference type="InterPro" id="IPR018278">
    <property type="entry name" value="Ribosomal_bS21_CS"/>
</dbReference>
<dbReference type="InterPro" id="IPR038380">
    <property type="entry name" value="Ribosomal_bS21_sf"/>
</dbReference>
<dbReference type="NCBIfam" id="TIGR00030">
    <property type="entry name" value="S21p"/>
    <property type="match status" value="1"/>
</dbReference>
<dbReference type="PANTHER" id="PTHR21109">
    <property type="entry name" value="MITOCHONDRIAL 28S RIBOSOMAL PROTEIN S21"/>
    <property type="match status" value="1"/>
</dbReference>
<dbReference type="PANTHER" id="PTHR21109:SF22">
    <property type="entry name" value="SMALL RIBOSOMAL SUBUNIT PROTEIN BS21"/>
    <property type="match status" value="1"/>
</dbReference>
<dbReference type="Pfam" id="PF01165">
    <property type="entry name" value="Ribosomal_S21"/>
    <property type="match status" value="1"/>
</dbReference>
<dbReference type="PRINTS" id="PR00976">
    <property type="entry name" value="RIBOSOMALS21"/>
</dbReference>
<dbReference type="PROSITE" id="PS01181">
    <property type="entry name" value="RIBOSOMAL_S21"/>
    <property type="match status" value="1"/>
</dbReference>
<comment type="similarity">
    <text evidence="1">Belongs to the bacterial ribosomal protein bS21 family.</text>
</comment>
<gene>
    <name evidence="1" type="primary">rpsU</name>
    <name type="ordered locus">CJA_0767</name>
</gene>
<sequence>MPSVKIKENEPFDVALRRFKRACEKAGILADVRARECYEKPTTVRKREAAAAVKRHAKKVQRESKKFTRLY</sequence>
<reference key="1">
    <citation type="journal article" date="2008" name="J. Bacteriol.">
        <title>Insights into plant cell wall degradation from the genome sequence of the soil bacterium Cellvibrio japonicus.</title>
        <authorList>
            <person name="DeBoy R.T."/>
            <person name="Mongodin E.F."/>
            <person name="Fouts D.E."/>
            <person name="Tailford L.E."/>
            <person name="Khouri H."/>
            <person name="Emerson J.B."/>
            <person name="Mohamoud Y."/>
            <person name="Watkins K."/>
            <person name="Henrissat B."/>
            <person name="Gilbert H.J."/>
            <person name="Nelson K.E."/>
        </authorList>
    </citation>
    <scope>NUCLEOTIDE SEQUENCE [LARGE SCALE GENOMIC DNA]</scope>
    <source>
        <strain>Ueda107</strain>
    </source>
</reference>
<name>RS21_CELJU</name>
<evidence type="ECO:0000255" key="1">
    <source>
        <dbReference type="HAMAP-Rule" id="MF_00358"/>
    </source>
</evidence>
<evidence type="ECO:0000305" key="2"/>
<keyword id="KW-1185">Reference proteome</keyword>
<keyword id="KW-0687">Ribonucleoprotein</keyword>
<keyword id="KW-0689">Ribosomal protein</keyword>
<accession>B3PKA4</accession>
<proteinExistence type="inferred from homology"/>